<reference key="1">
    <citation type="journal article" date="1993" name="Infect. Immun.">
        <title>Sequence divergence in two tandemly located pilin genes of Eikenella corrodens.</title>
        <authorList>
            <person name="Tonjum T."/>
            <person name="Weir S."/>
            <person name="Bovre K."/>
            <person name="Progulske-Fox A."/>
            <person name="Marrs C.F."/>
        </authorList>
    </citation>
    <scope>NUCLEOTIDE SEQUENCE [GENOMIC DNA]</scope>
    <source>
        <strain>31745</strain>
    </source>
</reference>
<feature type="propeptide" id="PRO_0000024186" description="Leader sequence" evidence="3">
    <location>
        <begin position="1"/>
        <end position="8"/>
    </location>
</feature>
<feature type="chain" id="PRO_0000024187" description="Fimbrial protein EcpC">
    <location>
        <begin position="9"/>
        <end position="153"/>
    </location>
</feature>
<feature type="transmembrane region" description="Helical" evidence="2">
    <location>
        <begin position="9"/>
        <end position="29"/>
    </location>
</feature>
<feature type="modified residue" description="N-methylphenylalanine" evidence="3">
    <location>
        <position position="9"/>
    </location>
</feature>
<feature type="disulfide bond" evidence="1">
    <location>
        <begin position="130"/>
        <end position="143"/>
    </location>
</feature>
<sequence>MLKQVQKGFTLIELMIVIAIIGILAAIALPAYQDYVARSQMSEAFNLAGGQKGAVSEYYSDKGVWPADNAAAGIAATVNGKYVNSVVVSAAGTNGVITATMKSTGVAKGVQGKTLALKGTANDGSFSWECSSNADAKYLPSSCRNAATPTPTP</sequence>
<proteinExistence type="inferred from homology"/>
<name>ECPC_EIKCO</name>
<evidence type="ECO:0000250" key="1"/>
<evidence type="ECO:0000255" key="2"/>
<evidence type="ECO:0000255" key="3">
    <source>
        <dbReference type="PROSITE-ProRule" id="PRU01070"/>
    </source>
</evidence>
<evidence type="ECO:0000305" key="4"/>
<gene>
    <name type="primary">ecpC</name>
</gene>
<protein>
    <recommendedName>
        <fullName>Fimbrial protein EcpC</fullName>
    </recommendedName>
    <alternativeName>
        <fullName>Pilin</fullName>
    </alternativeName>
</protein>
<dbReference type="EMBL" id="L12049">
    <property type="protein sequence ID" value="AAA03016.1"/>
    <property type="molecule type" value="Unassigned_DNA"/>
</dbReference>
<dbReference type="SMR" id="Q07564"/>
<dbReference type="STRING" id="539.A7P85_02420"/>
<dbReference type="GO" id="GO:0016020">
    <property type="term" value="C:membrane"/>
    <property type="evidence" value="ECO:0007669"/>
    <property type="project" value="UniProtKB-SubCell"/>
</dbReference>
<dbReference type="GO" id="GO:0044096">
    <property type="term" value="C:type IV pilus"/>
    <property type="evidence" value="ECO:0007669"/>
    <property type="project" value="TreeGrafter"/>
</dbReference>
<dbReference type="GO" id="GO:0007155">
    <property type="term" value="P:cell adhesion"/>
    <property type="evidence" value="ECO:0007669"/>
    <property type="project" value="InterPro"/>
</dbReference>
<dbReference type="GO" id="GO:0043107">
    <property type="term" value="P:type IV pilus-dependent motility"/>
    <property type="evidence" value="ECO:0007669"/>
    <property type="project" value="TreeGrafter"/>
</dbReference>
<dbReference type="Gene3D" id="3.30.700.10">
    <property type="entry name" value="Glycoprotein, Type 4 Pilin"/>
    <property type="match status" value="1"/>
</dbReference>
<dbReference type="InterPro" id="IPR012902">
    <property type="entry name" value="N_methyl_site"/>
</dbReference>
<dbReference type="InterPro" id="IPR001082">
    <property type="entry name" value="Pilin"/>
</dbReference>
<dbReference type="InterPro" id="IPR045584">
    <property type="entry name" value="Pilin-like"/>
</dbReference>
<dbReference type="InterPro" id="IPR050470">
    <property type="entry name" value="T4P/T2SS_Core"/>
</dbReference>
<dbReference type="NCBIfam" id="TIGR02532">
    <property type="entry name" value="IV_pilin_GFxxxE"/>
    <property type="match status" value="1"/>
</dbReference>
<dbReference type="PANTHER" id="PTHR30093">
    <property type="entry name" value="GENERAL SECRETION PATHWAY PROTEIN G"/>
    <property type="match status" value="1"/>
</dbReference>
<dbReference type="PANTHER" id="PTHR30093:SF34">
    <property type="entry name" value="PREPILIN PEPTIDASE-DEPENDENT PROTEIN D"/>
    <property type="match status" value="1"/>
</dbReference>
<dbReference type="Pfam" id="PF07963">
    <property type="entry name" value="N_methyl"/>
    <property type="match status" value="1"/>
</dbReference>
<dbReference type="Pfam" id="PF00114">
    <property type="entry name" value="Pilin"/>
    <property type="match status" value="1"/>
</dbReference>
<dbReference type="SUPFAM" id="SSF54523">
    <property type="entry name" value="Pili subunits"/>
    <property type="match status" value="1"/>
</dbReference>
<dbReference type="PROSITE" id="PS00409">
    <property type="entry name" value="PROKAR_NTER_METHYL"/>
    <property type="match status" value="1"/>
</dbReference>
<accession>Q07564</accession>
<organism>
    <name type="scientific">Eikenella corrodens</name>
    <dbReference type="NCBI Taxonomy" id="539"/>
    <lineage>
        <taxon>Bacteria</taxon>
        <taxon>Pseudomonadati</taxon>
        <taxon>Pseudomonadota</taxon>
        <taxon>Betaproteobacteria</taxon>
        <taxon>Neisseriales</taxon>
        <taxon>Neisseriaceae</taxon>
        <taxon>Eikenella</taxon>
    </lineage>
</organism>
<keyword id="KW-1015">Disulfide bond</keyword>
<keyword id="KW-0281">Fimbrium</keyword>
<keyword id="KW-0472">Membrane</keyword>
<keyword id="KW-0488">Methylation</keyword>
<keyword id="KW-0812">Transmembrane</keyword>
<keyword id="KW-1133">Transmembrane helix</keyword>
<comment type="subcellular location">
    <subcellularLocation>
        <location>Fimbrium</location>
    </subcellularLocation>
    <subcellularLocation>
        <location evidence="2">Membrane</location>
        <topology evidence="2">Single-pass membrane protein</topology>
    </subcellularLocation>
</comment>
<comment type="similarity">
    <text evidence="4">Belongs to the N-Me-Phe pilin family.</text>
</comment>